<dbReference type="EMBL" id="CP000046">
    <property type="protein sequence ID" value="AAW37729.1"/>
    <property type="molecule type" value="Genomic_DNA"/>
</dbReference>
<dbReference type="RefSeq" id="WP_000347061.1">
    <property type="nucleotide sequence ID" value="NZ_JBGOFO010000005.1"/>
</dbReference>
<dbReference type="SMR" id="Q5HIA2"/>
<dbReference type="KEGG" id="sac:SACOL0620"/>
<dbReference type="HOGENOM" id="CLU_001265_39_5_9"/>
<dbReference type="Proteomes" id="UP000000530">
    <property type="component" value="Chromosome"/>
</dbReference>
<dbReference type="GO" id="GO:0005886">
    <property type="term" value="C:plasma membrane"/>
    <property type="evidence" value="ECO:0007669"/>
    <property type="project" value="UniProtKB-SubCell"/>
</dbReference>
<dbReference type="GO" id="GO:0015293">
    <property type="term" value="F:symporter activity"/>
    <property type="evidence" value="ECO:0007669"/>
    <property type="project" value="UniProtKB-KW"/>
</dbReference>
<dbReference type="CDD" id="cd17366">
    <property type="entry name" value="MFS_ProP"/>
    <property type="match status" value="1"/>
</dbReference>
<dbReference type="FunFam" id="1.20.1250.20:FF:000001">
    <property type="entry name" value="Dicarboxylate MFS transporter"/>
    <property type="match status" value="1"/>
</dbReference>
<dbReference type="FunFam" id="1.20.1250.20:FF:000236">
    <property type="entry name" value="Proline/betaine transporter, putative"/>
    <property type="match status" value="1"/>
</dbReference>
<dbReference type="Gene3D" id="1.20.1250.20">
    <property type="entry name" value="MFS general substrate transporter like domains"/>
    <property type="match status" value="2"/>
</dbReference>
<dbReference type="InterPro" id="IPR051084">
    <property type="entry name" value="H+-coupled_symporters"/>
</dbReference>
<dbReference type="InterPro" id="IPR011701">
    <property type="entry name" value="MFS"/>
</dbReference>
<dbReference type="InterPro" id="IPR020846">
    <property type="entry name" value="MFS_dom"/>
</dbReference>
<dbReference type="InterPro" id="IPR036259">
    <property type="entry name" value="MFS_trans_sf"/>
</dbReference>
<dbReference type="InterPro" id="IPR005829">
    <property type="entry name" value="Sugar_transporter_CS"/>
</dbReference>
<dbReference type="PANTHER" id="PTHR43528">
    <property type="entry name" value="ALPHA-KETOGLUTARATE PERMEASE"/>
    <property type="match status" value="1"/>
</dbReference>
<dbReference type="PANTHER" id="PTHR43528:SF1">
    <property type="entry name" value="ALPHA-KETOGLUTARATE PERMEASE"/>
    <property type="match status" value="1"/>
</dbReference>
<dbReference type="Pfam" id="PF07690">
    <property type="entry name" value="MFS_1"/>
    <property type="match status" value="1"/>
</dbReference>
<dbReference type="SUPFAM" id="SSF103473">
    <property type="entry name" value="MFS general substrate transporter"/>
    <property type="match status" value="1"/>
</dbReference>
<dbReference type="PROSITE" id="PS50850">
    <property type="entry name" value="MFS"/>
    <property type="match status" value="1"/>
</dbReference>
<dbReference type="PROSITE" id="PS00217">
    <property type="entry name" value="SUGAR_TRANSPORT_2"/>
    <property type="match status" value="1"/>
</dbReference>
<proteinExistence type="inferred from homology"/>
<accession>Q5HIA2</accession>
<evidence type="ECO:0000250" key="1"/>
<evidence type="ECO:0000255" key="2"/>
<evidence type="ECO:0000305" key="3"/>
<reference key="1">
    <citation type="journal article" date="2005" name="J. Bacteriol.">
        <title>Insights on evolution of virulence and resistance from the complete genome analysis of an early methicillin-resistant Staphylococcus aureus strain and a biofilm-producing methicillin-resistant Staphylococcus epidermidis strain.</title>
        <authorList>
            <person name="Gill S.R."/>
            <person name="Fouts D.E."/>
            <person name="Archer G.L."/>
            <person name="Mongodin E.F."/>
            <person name="DeBoy R.T."/>
            <person name="Ravel J."/>
            <person name="Paulsen I.T."/>
            <person name="Kolonay J.F."/>
            <person name="Brinkac L.M."/>
            <person name="Beanan M.J."/>
            <person name="Dodson R.J."/>
            <person name="Daugherty S.C."/>
            <person name="Madupu R."/>
            <person name="Angiuoli S.V."/>
            <person name="Durkin A.S."/>
            <person name="Haft D.H."/>
            <person name="Vamathevan J.J."/>
            <person name="Khouri H."/>
            <person name="Utterback T.R."/>
            <person name="Lee C."/>
            <person name="Dimitrov G."/>
            <person name="Jiang L."/>
            <person name="Qin H."/>
            <person name="Weidman J."/>
            <person name="Tran K."/>
            <person name="Kang K.H."/>
            <person name="Hance I.R."/>
            <person name="Nelson K.E."/>
            <person name="Fraser C.M."/>
        </authorList>
    </citation>
    <scope>NUCLEOTIDE SEQUENCE [LARGE SCALE GENOMIC DNA]</scope>
    <source>
        <strain>COL</strain>
    </source>
</reference>
<organism>
    <name type="scientific">Staphylococcus aureus (strain COL)</name>
    <dbReference type="NCBI Taxonomy" id="93062"/>
    <lineage>
        <taxon>Bacteria</taxon>
        <taxon>Bacillati</taxon>
        <taxon>Bacillota</taxon>
        <taxon>Bacilli</taxon>
        <taxon>Bacillales</taxon>
        <taxon>Staphylococcaceae</taxon>
        <taxon>Staphylococcus</taxon>
    </lineage>
</organism>
<sequence length="466" mass="51658">MDFNKENINMVDAKKAKKTVVATGIGNAMEWFDFGVYAYTTAYIGANFFSPVENADIRQMLTFAALAIAFLLRPIGGVVFGIIGDKYGRKVVLTSTIILMAFSTLTIGLLPSYDQIGLWAPILLLLARVLQGFSTGGEYAGAMTYVAESSPDKRRNSLGSGLEIGTLSGYIAASIMIAVLTFFLTDEQMASFGWRIPFLLGLFLGLFGLYLRRKLEESPVFENDVATQPERDNINFLQIIRFYYKDIFVCFVAVVFFNVTNYMVTAYLPTYLEQVIKLDATTTSVLITCVMAIMIPLALMFGKLADKIGEKKVFLIGTGGLTLFSIIAFMLLHSQSFVVIVIGIFILGFFLSTYEATMPGSLPTMFYSHIRYRTLSVTFNISVSIFGGTTPLVATWLVTKTGDPLAPAYYLTAISVIGFLVITFLHLSTAGKSLKGSYPNVDNEQDRAYYAEHPKEALWWVKERKN</sequence>
<gene>
    <name type="primary">proP</name>
    <name type="ordered locus">SACOL0620</name>
</gene>
<comment type="function">
    <text evidence="1">May be a proton symporter involved in the uptake of osmolytes such as proline and glycine betaine.</text>
</comment>
<comment type="subcellular location">
    <subcellularLocation>
        <location evidence="3">Cell membrane</location>
        <topology evidence="3">Multi-pass membrane protein</topology>
    </subcellularLocation>
</comment>
<comment type="similarity">
    <text evidence="3">Belongs to the major facilitator superfamily. Metabolite:H+ Symporter (MHS) family (TC 2.A.1.6) family.</text>
</comment>
<name>PROP_STAAC</name>
<keyword id="KW-1003">Cell membrane</keyword>
<keyword id="KW-0472">Membrane</keyword>
<keyword id="KW-0769">Symport</keyword>
<keyword id="KW-0812">Transmembrane</keyword>
<keyword id="KW-1133">Transmembrane helix</keyword>
<keyword id="KW-0813">Transport</keyword>
<protein>
    <recommendedName>
        <fullName>Putative proline/betaine transporter</fullName>
    </recommendedName>
</protein>
<feature type="chain" id="PRO_0000050327" description="Putative proline/betaine transporter">
    <location>
        <begin position="1"/>
        <end position="466"/>
    </location>
</feature>
<feature type="transmembrane region" description="Helical" evidence="2">
    <location>
        <begin position="20"/>
        <end position="42"/>
    </location>
</feature>
<feature type="transmembrane region" description="Helical" evidence="2">
    <location>
        <begin position="63"/>
        <end position="83"/>
    </location>
</feature>
<feature type="transmembrane region" description="Helical" evidence="2">
    <location>
        <begin position="91"/>
        <end position="111"/>
    </location>
</feature>
<feature type="transmembrane region" description="Helical" evidence="2">
    <location>
        <begin position="116"/>
        <end position="136"/>
    </location>
</feature>
<feature type="transmembrane region" description="Helical" evidence="2">
    <location>
        <begin position="164"/>
        <end position="184"/>
    </location>
</feature>
<feature type="transmembrane region" description="Helical" evidence="2">
    <location>
        <begin position="191"/>
        <end position="211"/>
    </location>
</feature>
<feature type="transmembrane region" description="Helical" evidence="2">
    <location>
        <begin position="247"/>
        <end position="267"/>
    </location>
</feature>
<feature type="transmembrane region" description="Helical" evidence="2">
    <location>
        <begin position="285"/>
        <end position="305"/>
    </location>
</feature>
<feature type="transmembrane region" description="Helical" evidence="2">
    <location>
        <begin position="313"/>
        <end position="332"/>
    </location>
</feature>
<feature type="transmembrane region" description="Helical" evidence="2">
    <location>
        <begin position="337"/>
        <end position="354"/>
    </location>
</feature>
<feature type="transmembrane region" description="Helical" evidence="2">
    <location>
        <begin position="377"/>
        <end position="397"/>
    </location>
</feature>
<feature type="transmembrane region" description="Helical" evidence="2">
    <location>
        <begin position="405"/>
        <end position="425"/>
    </location>
</feature>